<reference key="1">
    <citation type="journal article" date="2009" name="J. Bacteriol.">
        <title>Genome sequences of three Agrobacterium biovars help elucidate the evolution of multichromosome genomes in bacteria.</title>
        <authorList>
            <person name="Slater S.C."/>
            <person name="Goldman B.S."/>
            <person name="Goodner B."/>
            <person name="Setubal J.C."/>
            <person name="Farrand S.K."/>
            <person name="Nester E.W."/>
            <person name="Burr T.J."/>
            <person name="Banta L."/>
            <person name="Dickerman A.W."/>
            <person name="Paulsen I."/>
            <person name="Otten L."/>
            <person name="Suen G."/>
            <person name="Welch R."/>
            <person name="Almeida N.F."/>
            <person name="Arnold F."/>
            <person name="Burton O.T."/>
            <person name="Du Z."/>
            <person name="Ewing A."/>
            <person name="Godsy E."/>
            <person name="Heisel S."/>
            <person name="Houmiel K.L."/>
            <person name="Jhaveri J."/>
            <person name="Lu J."/>
            <person name="Miller N.M."/>
            <person name="Norton S."/>
            <person name="Chen Q."/>
            <person name="Phoolcharoen W."/>
            <person name="Ohlin V."/>
            <person name="Ondrusek D."/>
            <person name="Pride N."/>
            <person name="Stricklin S.L."/>
            <person name="Sun J."/>
            <person name="Wheeler C."/>
            <person name="Wilson L."/>
            <person name="Zhu H."/>
            <person name="Wood D.W."/>
        </authorList>
    </citation>
    <scope>NUCLEOTIDE SEQUENCE [LARGE SCALE GENOMIC DNA]</scope>
    <source>
        <strain>ATCC BAA-846 / DSM 112012 / S4</strain>
    </source>
</reference>
<feature type="chain" id="PRO_1000134681" description="3-hydroxyacyl-[acyl-carrier-protein] dehydratase FabZ">
    <location>
        <begin position="1"/>
        <end position="154"/>
    </location>
</feature>
<feature type="active site" evidence="1">
    <location>
        <position position="57"/>
    </location>
</feature>
<gene>
    <name evidence="1" type="primary">fabZ</name>
    <name type="ordered locus">Avi_2514</name>
</gene>
<organism>
    <name type="scientific">Allorhizobium ampelinum (strain ATCC BAA-846 / DSM 112012 / S4)</name>
    <name type="common">Agrobacterium vitis (strain S4)</name>
    <dbReference type="NCBI Taxonomy" id="311402"/>
    <lineage>
        <taxon>Bacteria</taxon>
        <taxon>Pseudomonadati</taxon>
        <taxon>Pseudomonadota</taxon>
        <taxon>Alphaproteobacteria</taxon>
        <taxon>Hyphomicrobiales</taxon>
        <taxon>Rhizobiaceae</taxon>
        <taxon>Rhizobium/Agrobacterium group</taxon>
        <taxon>Allorhizobium</taxon>
        <taxon>Allorhizobium ampelinum</taxon>
    </lineage>
</organism>
<name>FABZ_ALLAM</name>
<comment type="function">
    <text evidence="1">Involved in unsaturated fatty acids biosynthesis. Catalyzes the dehydration of short chain beta-hydroxyacyl-ACPs and long chain saturated and unsaturated beta-hydroxyacyl-ACPs.</text>
</comment>
<comment type="catalytic activity">
    <reaction evidence="1">
        <text>a (3R)-hydroxyacyl-[ACP] = a (2E)-enoyl-[ACP] + H2O</text>
        <dbReference type="Rhea" id="RHEA:13097"/>
        <dbReference type="Rhea" id="RHEA-COMP:9925"/>
        <dbReference type="Rhea" id="RHEA-COMP:9945"/>
        <dbReference type="ChEBI" id="CHEBI:15377"/>
        <dbReference type="ChEBI" id="CHEBI:78784"/>
        <dbReference type="ChEBI" id="CHEBI:78827"/>
        <dbReference type="EC" id="4.2.1.59"/>
    </reaction>
</comment>
<comment type="subcellular location">
    <subcellularLocation>
        <location evidence="1">Cytoplasm</location>
    </subcellularLocation>
</comment>
<comment type="similarity">
    <text evidence="1">Belongs to the thioester dehydratase family. FabZ subfamily.</text>
</comment>
<evidence type="ECO:0000255" key="1">
    <source>
        <dbReference type="HAMAP-Rule" id="MF_00406"/>
    </source>
</evidence>
<proteinExistence type="inferred from homology"/>
<accession>B9JX24</accession>
<dbReference type="EC" id="4.2.1.59" evidence="1"/>
<dbReference type="EMBL" id="CP000633">
    <property type="protein sequence ID" value="ACM36802.1"/>
    <property type="molecule type" value="Genomic_DNA"/>
</dbReference>
<dbReference type="RefSeq" id="WP_015916223.1">
    <property type="nucleotide sequence ID" value="NC_011989.1"/>
</dbReference>
<dbReference type="SMR" id="B9JX24"/>
<dbReference type="STRING" id="311402.Avi_2514"/>
<dbReference type="GeneID" id="60682824"/>
<dbReference type="KEGG" id="avi:Avi_2514"/>
<dbReference type="eggNOG" id="COG0764">
    <property type="taxonomic scope" value="Bacteria"/>
</dbReference>
<dbReference type="HOGENOM" id="CLU_078912_1_2_5"/>
<dbReference type="Proteomes" id="UP000001596">
    <property type="component" value="Chromosome 1"/>
</dbReference>
<dbReference type="GO" id="GO:0005737">
    <property type="term" value="C:cytoplasm"/>
    <property type="evidence" value="ECO:0007669"/>
    <property type="project" value="UniProtKB-SubCell"/>
</dbReference>
<dbReference type="GO" id="GO:0016020">
    <property type="term" value="C:membrane"/>
    <property type="evidence" value="ECO:0007669"/>
    <property type="project" value="GOC"/>
</dbReference>
<dbReference type="GO" id="GO:0019171">
    <property type="term" value="F:(3R)-hydroxyacyl-[acyl-carrier-protein] dehydratase activity"/>
    <property type="evidence" value="ECO:0007669"/>
    <property type="project" value="UniProtKB-EC"/>
</dbReference>
<dbReference type="GO" id="GO:0006633">
    <property type="term" value="P:fatty acid biosynthetic process"/>
    <property type="evidence" value="ECO:0007669"/>
    <property type="project" value="UniProtKB-UniRule"/>
</dbReference>
<dbReference type="GO" id="GO:0009245">
    <property type="term" value="P:lipid A biosynthetic process"/>
    <property type="evidence" value="ECO:0007669"/>
    <property type="project" value="UniProtKB-UniRule"/>
</dbReference>
<dbReference type="CDD" id="cd01288">
    <property type="entry name" value="FabZ"/>
    <property type="match status" value="1"/>
</dbReference>
<dbReference type="FunFam" id="3.10.129.10:FF:000001">
    <property type="entry name" value="3-hydroxyacyl-[acyl-carrier-protein] dehydratase FabZ"/>
    <property type="match status" value="1"/>
</dbReference>
<dbReference type="Gene3D" id="3.10.129.10">
    <property type="entry name" value="Hotdog Thioesterase"/>
    <property type="match status" value="1"/>
</dbReference>
<dbReference type="HAMAP" id="MF_00406">
    <property type="entry name" value="FabZ"/>
    <property type="match status" value="1"/>
</dbReference>
<dbReference type="InterPro" id="IPR013114">
    <property type="entry name" value="FabA_FabZ"/>
</dbReference>
<dbReference type="InterPro" id="IPR010084">
    <property type="entry name" value="FabZ"/>
</dbReference>
<dbReference type="InterPro" id="IPR029069">
    <property type="entry name" value="HotDog_dom_sf"/>
</dbReference>
<dbReference type="NCBIfam" id="TIGR01750">
    <property type="entry name" value="fabZ"/>
    <property type="match status" value="1"/>
</dbReference>
<dbReference type="NCBIfam" id="NF000582">
    <property type="entry name" value="PRK00006.1"/>
    <property type="match status" value="1"/>
</dbReference>
<dbReference type="PANTHER" id="PTHR30272">
    <property type="entry name" value="3-HYDROXYACYL-[ACYL-CARRIER-PROTEIN] DEHYDRATASE"/>
    <property type="match status" value="1"/>
</dbReference>
<dbReference type="PANTHER" id="PTHR30272:SF1">
    <property type="entry name" value="3-HYDROXYACYL-[ACYL-CARRIER-PROTEIN] DEHYDRATASE"/>
    <property type="match status" value="1"/>
</dbReference>
<dbReference type="Pfam" id="PF07977">
    <property type="entry name" value="FabA"/>
    <property type="match status" value="1"/>
</dbReference>
<dbReference type="SUPFAM" id="SSF54637">
    <property type="entry name" value="Thioesterase/thiol ester dehydrase-isomerase"/>
    <property type="match status" value="1"/>
</dbReference>
<keyword id="KW-0963">Cytoplasm</keyword>
<keyword id="KW-0441">Lipid A biosynthesis</keyword>
<keyword id="KW-0444">Lipid biosynthesis</keyword>
<keyword id="KW-0443">Lipid metabolism</keyword>
<keyword id="KW-0456">Lyase</keyword>
<keyword id="KW-1185">Reference proteome</keyword>
<sequence length="154" mass="16970">MTVEQKELGRADILEIMKLLPHRYPFLLVDRIIDIDGDNAAIGIKNVTANEPQFTGHFPEQPIMPGVLLIEGMAQTAGAICARKAGTAGDLVYFMTIDNARFRKPVVPGDRVEFHVTKQKQRGNVWKFHCDAKVDGALVAEADIGAMIVNKEAQ</sequence>
<protein>
    <recommendedName>
        <fullName evidence="1">3-hydroxyacyl-[acyl-carrier-protein] dehydratase FabZ</fullName>
        <ecNumber evidence="1">4.2.1.59</ecNumber>
    </recommendedName>
    <alternativeName>
        <fullName evidence="1">(3R)-hydroxymyristoyl-[acyl-carrier-protein] dehydratase</fullName>
        <shortName evidence="1">(3R)-hydroxymyristoyl-ACP dehydrase</shortName>
    </alternativeName>
    <alternativeName>
        <fullName evidence="1">Beta-hydroxyacyl-ACP dehydratase</fullName>
    </alternativeName>
</protein>